<reference key="1">
    <citation type="journal article" date="2010" name="Genome Biol. Evol.">
        <title>Continuing evolution of Burkholderia mallei through genome reduction and large-scale rearrangements.</title>
        <authorList>
            <person name="Losada L."/>
            <person name="Ronning C.M."/>
            <person name="DeShazer D."/>
            <person name="Woods D."/>
            <person name="Fedorova N."/>
            <person name="Kim H.S."/>
            <person name="Shabalina S.A."/>
            <person name="Pearson T.R."/>
            <person name="Brinkac L."/>
            <person name="Tan P."/>
            <person name="Nandi T."/>
            <person name="Crabtree J."/>
            <person name="Badger J."/>
            <person name="Beckstrom-Sternberg S."/>
            <person name="Saqib M."/>
            <person name="Schutzer S.E."/>
            <person name="Keim P."/>
            <person name="Nierman W.C."/>
        </authorList>
    </citation>
    <scope>NUCLEOTIDE SEQUENCE [LARGE SCALE GENOMIC DNA]</scope>
    <source>
        <strain>NCTC 10229</strain>
    </source>
</reference>
<proteinExistence type="inferred from homology"/>
<evidence type="ECO:0000255" key="1">
    <source>
        <dbReference type="HAMAP-Rule" id="MF_00739"/>
    </source>
</evidence>
<accession>A2S998</accession>
<feature type="chain" id="PRO_1000046316" description="Urease subunit gamma">
    <location>
        <begin position="1"/>
        <end position="100"/>
    </location>
</feature>
<protein>
    <recommendedName>
        <fullName evidence="1">Urease subunit gamma</fullName>
        <ecNumber evidence="1">3.5.1.5</ecNumber>
    </recommendedName>
    <alternativeName>
        <fullName evidence="1">Urea amidohydrolase subunit gamma</fullName>
    </alternativeName>
</protein>
<gene>
    <name evidence="1" type="primary">ureA</name>
    <name type="ordered locus">BMA10229_A2559</name>
</gene>
<dbReference type="EC" id="3.5.1.5" evidence="1"/>
<dbReference type="EMBL" id="CP000546">
    <property type="protein sequence ID" value="ABN03750.1"/>
    <property type="molecule type" value="Genomic_DNA"/>
</dbReference>
<dbReference type="RefSeq" id="WP_004186513.1">
    <property type="nucleotide sequence ID" value="NC_008836.1"/>
</dbReference>
<dbReference type="SMR" id="A2S998"/>
<dbReference type="GeneID" id="93061237"/>
<dbReference type="KEGG" id="bml:BMA10229_A2559"/>
<dbReference type="HOGENOM" id="CLU_145825_1_0_4"/>
<dbReference type="UniPathway" id="UPA00258">
    <property type="reaction ID" value="UER00370"/>
</dbReference>
<dbReference type="Proteomes" id="UP000002283">
    <property type="component" value="Chromosome I"/>
</dbReference>
<dbReference type="GO" id="GO:0005737">
    <property type="term" value="C:cytoplasm"/>
    <property type="evidence" value="ECO:0007669"/>
    <property type="project" value="UniProtKB-SubCell"/>
</dbReference>
<dbReference type="GO" id="GO:0016151">
    <property type="term" value="F:nickel cation binding"/>
    <property type="evidence" value="ECO:0007669"/>
    <property type="project" value="InterPro"/>
</dbReference>
<dbReference type="GO" id="GO:0009039">
    <property type="term" value="F:urease activity"/>
    <property type="evidence" value="ECO:0007669"/>
    <property type="project" value="UniProtKB-UniRule"/>
</dbReference>
<dbReference type="GO" id="GO:0043419">
    <property type="term" value="P:urea catabolic process"/>
    <property type="evidence" value="ECO:0007669"/>
    <property type="project" value="UniProtKB-UniRule"/>
</dbReference>
<dbReference type="CDD" id="cd00390">
    <property type="entry name" value="Urease_gamma"/>
    <property type="match status" value="1"/>
</dbReference>
<dbReference type="Gene3D" id="3.30.280.10">
    <property type="entry name" value="Urease, gamma-like subunit"/>
    <property type="match status" value="1"/>
</dbReference>
<dbReference type="HAMAP" id="MF_00739">
    <property type="entry name" value="Urease_gamma"/>
    <property type="match status" value="1"/>
</dbReference>
<dbReference type="InterPro" id="IPR012010">
    <property type="entry name" value="Urease_gamma"/>
</dbReference>
<dbReference type="InterPro" id="IPR002026">
    <property type="entry name" value="Urease_gamma/gamma-beta_su"/>
</dbReference>
<dbReference type="InterPro" id="IPR036463">
    <property type="entry name" value="Urease_gamma_sf"/>
</dbReference>
<dbReference type="InterPro" id="IPR050069">
    <property type="entry name" value="Urease_subunit"/>
</dbReference>
<dbReference type="NCBIfam" id="NF009712">
    <property type="entry name" value="PRK13241.1"/>
    <property type="match status" value="1"/>
</dbReference>
<dbReference type="NCBIfam" id="TIGR00193">
    <property type="entry name" value="urease_gam"/>
    <property type="match status" value="1"/>
</dbReference>
<dbReference type="PANTHER" id="PTHR33569">
    <property type="entry name" value="UREASE"/>
    <property type="match status" value="1"/>
</dbReference>
<dbReference type="PANTHER" id="PTHR33569:SF1">
    <property type="entry name" value="UREASE"/>
    <property type="match status" value="1"/>
</dbReference>
<dbReference type="Pfam" id="PF00547">
    <property type="entry name" value="Urease_gamma"/>
    <property type="match status" value="1"/>
</dbReference>
<dbReference type="PIRSF" id="PIRSF001223">
    <property type="entry name" value="Urease_gamma"/>
    <property type="match status" value="1"/>
</dbReference>
<dbReference type="SUPFAM" id="SSF54111">
    <property type="entry name" value="Urease, gamma-subunit"/>
    <property type="match status" value="1"/>
</dbReference>
<organism>
    <name type="scientific">Burkholderia mallei (strain NCTC 10229)</name>
    <dbReference type="NCBI Taxonomy" id="412022"/>
    <lineage>
        <taxon>Bacteria</taxon>
        <taxon>Pseudomonadati</taxon>
        <taxon>Pseudomonadota</taxon>
        <taxon>Betaproteobacteria</taxon>
        <taxon>Burkholderiales</taxon>
        <taxon>Burkholderiaceae</taxon>
        <taxon>Burkholderia</taxon>
        <taxon>pseudomallei group</taxon>
    </lineage>
</organism>
<keyword id="KW-0963">Cytoplasm</keyword>
<keyword id="KW-0378">Hydrolase</keyword>
<name>URE3_BURM9</name>
<comment type="catalytic activity">
    <reaction evidence="1">
        <text>urea + 2 H2O + H(+) = hydrogencarbonate + 2 NH4(+)</text>
        <dbReference type="Rhea" id="RHEA:20557"/>
        <dbReference type="ChEBI" id="CHEBI:15377"/>
        <dbReference type="ChEBI" id="CHEBI:15378"/>
        <dbReference type="ChEBI" id="CHEBI:16199"/>
        <dbReference type="ChEBI" id="CHEBI:17544"/>
        <dbReference type="ChEBI" id="CHEBI:28938"/>
        <dbReference type="EC" id="3.5.1.5"/>
    </reaction>
</comment>
<comment type="pathway">
    <text evidence="1">Nitrogen metabolism; urea degradation; CO(2) and NH(3) from urea (urease route): step 1/1.</text>
</comment>
<comment type="subunit">
    <text evidence="1">Heterotrimer of UreA (gamma), UreB (beta) and UreC (alpha) subunits. Three heterotrimers associate to form the active enzyme.</text>
</comment>
<comment type="subcellular location">
    <subcellularLocation>
        <location evidence="1">Cytoplasm</location>
    </subcellularLocation>
</comment>
<comment type="similarity">
    <text evidence="1">Belongs to the urease gamma subunit family.</text>
</comment>
<sequence length="100" mass="11172">MKLTPREKDKLLIFTAALLAERRRARGLKLNYPETVAFITAALMEAARDGRTVAEVMHYGTTLLTRDDVMEGVPEMIPDIQVEATFPDGTKLVTVHHPIP</sequence>